<sequence>MVLIRVLANLLILQLSYAQKSSELVTGGHPCNINEHPFLVLVYHDGYQCGGTLINEEWVLTAAHCDGKKMKLQFGLHSKNEPNKDKQTRVPKEKFFCLSSKNFIKWGKDIMLIRLNRPVNNSTHIAPLSLPSSPPSQNTVCNIMGWGTISPTKEIYPDVPHCANINILDHAVCRAFYPGLLEKSKTLCAGILQGGKDICQGDSGGPLICNGQVQGIVSVGGNPCAEPRVPAIYTKVFDHLDWIKSIIAGNTAATCPL</sequence>
<protein>
    <recommendedName>
        <fullName>Snake venom serine protease KN11</fullName>
        <shortName>SVSP</shortName>
        <ecNumber>3.4.21.-</ecNumber>
    </recommendedName>
</protein>
<keyword id="KW-1015">Disulfide bond</keyword>
<keyword id="KW-0325">Glycoprotein</keyword>
<keyword id="KW-1199">Hemostasis impairing toxin</keyword>
<keyword id="KW-0378">Hydrolase</keyword>
<keyword id="KW-0645">Protease</keyword>
<keyword id="KW-0964">Secreted</keyword>
<keyword id="KW-0720">Serine protease</keyword>
<keyword id="KW-0732">Signal</keyword>
<keyword id="KW-0800">Toxin</keyword>
<keyword id="KW-0865">Zymogen</keyword>
<accession>Q71QI7</accession>
<proteinExistence type="evidence at transcript level"/>
<feature type="signal peptide" evidence="2">
    <location>
        <begin position="1"/>
        <end position="18"/>
    </location>
</feature>
<feature type="propeptide" id="PRO_0000295835" evidence="1">
    <location>
        <begin position="19"/>
        <end position="24"/>
    </location>
</feature>
<feature type="chain" id="PRO_5000061222" description="Snake venom serine protease KN11">
    <location>
        <begin position="25"/>
        <end position="257"/>
    </location>
</feature>
<feature type="domain" description="Peptidase S1" evidence="3">
    <location>
        <begin position="25"/>
        <end position="248"/>
    </location>
</feature>
<feature type="active site" description="Charge relay system" evidence="1">
    <location>
        <position position="64"/>
    </location>
</feature>
<feature type="active site" description="Charge relay system" evidence="1">
    <location>
        <position position="109"/>
    </location>
</feature>
<feature type="active site" description="Charge relay system" evidence="1">
    <location>
        <position position="203"/>
    </location>
</feature>
<feature type="glycosylation site" description="N-linked (GlcNAc...) asparagine" evidence="2">
    <location>
        <position position="120"/>
    </location>
</feature>
<feature type="glycosylation site" description="N-linked (GlcNAc...) asparagine" evidence="2">
    <location>
        <position position="121"/>
    </location>
</feature>
<feature type="disulfide bond" evidence="3">
    <location>
        <begin position="31"/>
        <end position="162"/>
    </location>
</feature>
<feature type="disulfide bond" evidence="3">
    <location>
        <begin position="49"/>
        <end position="65"/>
    </location>
</feature>
<feature type="disulfide bond" evidence="3">
    <location>
        <begin position="97"/>
        <end position="255"/>
    </location>
</feature>
<feature type="disulfide bond" evidence="3">
    <location>
        <begin position="141"/>
        <end position="209"/>
    </location>
</feature>
<feature type="disulfide bond" evidence="3">
    <location>
        <begin position="173"/>
        <end position="188"/>
    </location>
</feature>
<feature type="disulfide bond" evidence="3">
    <location>
        <begin position="199"/>
        <end position="224"/>
    </location>
</feature>
<reference key="1">
    <citation type="submission" date="2001-06" db="EMBL/GenBank/DDBJ databases">
        <title>Identification of geographic variations and cloning of venom proteins of Trimeresurus stejnegeri: serine proteases and phospholipases.</title>
        <authorList>
            <person name="Tsai I.-H."/>
            <person name="Wang Y.-M."/>
        </authorList>
    </citation>
    <scope>NUCLEOTIDE SEQUENCE [MRNA]</scope>
    <source>
        <tissue>Venom gland</tissue>
    </source>
</reference>
<name>VSP11_TRIST</name>
<evidence type="ECO:0000250" key="1"/>
<evidence type="ECO:0000255" key="2"/>
<evidence type="ECO:0000255" key="3">
    <source>
        <dbReference type="PROSITE-ProRule" id="PRU00274"/>
    </source>
</evidence>
<organism>
    <name type="scientific">Trimeresurus stejnegeri</name>
    <name type="common">Chinese green tree viper</name>
    <name type="synonym">Viridovipera stejnegeri</name>
    <dbReference type="NCBI Taxonomy" id="39682"/>
    <lineage>
        <taxon>Eukaryota</taxon>
        <taxon>Metazoa</taxon>
        <taxon>Chordata</taxon>
        <taxon>Craniata</taxon>
        <taxon>Vertebrata</taxon>
        <taxon>Euteleostomi</taxon>
        <taxon>Lepidosauria</taxon>
        <taxon>Squamata</taxon>
        <taxon>Bifurcata</taxon>
        <taxon>Unidentata</taxon>
        <taxon>Episquamata</taxon>
        <taxon>Toxicofera</taxon>
        <taxon>Serpentes</taxon>
        <taxon>Colubroidea</taxon>
        <taxon>Viperidae</taxon>
        <taxon>Crotalinae</taxon>
        <taxon>Trimeresurus</taxon>
    </lineage>
</organism>
<dbReference type="EC" id="3.4.21.-"/>
<dbReference type="EMBL" id="AF395770">
    <property type="protein sequence ID" value="AAQ02900.1"/>
    <property type="molecule type" value="mRNA"/>
</dbReference>
<dbReference type="SMR" id="Q71QI7"/>
<dbReference type="MEROPS" id="S01.497"/>
<dbReference type="GO" id="GO:0005576">
    <property type="term" value="C:extracellular region"/>
    <property type="evidence" value="ECO:0007669"/>
    <property type="project" value="UniProtKB-SubCell"/>
</dbReference>
<dbReference type="GO" id="GO:0030141">
    <property type="term" value="C:secretory granule"/>
    <property type="evidence" value="ECO:0007669"/>
    <property type="project" value="TreeGrafter"/>
</dbReference>
<dbReference type="GO" id="GO:0004252">
    <property type="term" value="F:serine-type endopeptidase activity"/>
    <property type="evidence" value="ECO:0007669"/>
    <property type="project" value="InterPro"/>
</dbReference>
<dbReference type="GO" id="GO:0090729">
    <property type="term" value="F:toxin activity"/>
    <property type="evidence" value="ECO:0007669"/>
    <property type="project" value="UniProtKB-KW"/>
</dbReference>
<dbReference type="GO" id="GO:0006508">
    <property type="term" value="P:proteolysis"/>
    <property type="evidence" value="ECO:0007669"/>
    <property type="project" value="UniProtKB-KW"/>
</dbReference>
<dbReference type="CDD" id="cd00190">
    <property type="entry name" value="Tryp_SPc"/>
    <property type="match status" value="1"/>
</dbReference>
<dbReference type="FunFam" id="2.40.10.10:FF:000158">
    <property type="entry name" value="Thrombin-like enzyme saxthrombin"/>
    <property type="match status" value="1"/>
</dbReference>
<dbReference type="FunFam" id="2.40.10.10:FF:000153">
    <property type="entry name" value="Venom plasminogen activator TSV-PA"/>
    <property type="match status" value="1"/>
</dbReference>
<dbReference type="Gene3D" id="2.40.10.10">
    <property type="entry name" value="Trypsin-like serine proteases"/>
    <property type="match status" value="2"/>
</dbReference>
<dbReference type="InterPro" id="IPR009003">
    <property type="entry name" value="Peptidase_S1_PA"/>
</dbReference>
<dbReference type="InterPro" id="IPR043504">
    <property type="entry name" value="Peptidase_S1_PA_chymotrypsin"/>
</dbReference>
<dbReference type="InterPro" id="IPR001314">
    <property type="entry name" value="Peptidase_S1A"/>
</dbReference>
<dbReference type="InterPro" id="IPR001254">
    <property type="entry name" value="Trypsin_dom"/>
</dbReference>
<dbReference type="InterPro" id="IPR018114">
    <property type="entry name" value="TRYPSIN_HIS"/>
</dbReference>
<dbReference type="InterPro" id="IPR033116">
    <property type="entry name" value="TRYPSIN_SER"/>
</dbReference>
<dbReference type="PANTHER" id="PTHR24271:SF47">
    <property type="entry name" value="KALLIKREIN-1"/>
    <property type="match status" value="1"/>
</dbReference>
<dbReference type="PANTHER" id="PTHR24271">
    <property type="entry name" value="KALLIKREIN-RELATED"/>
    <property type="match status" value="1"/>
</dbReference>
<dbReference type="Pfam" id="PF00089">
    <property type="entry name" value="Trypsin"/>
    <property type="match status" value="1"/>
</dbReference>
<dbReference type="PRINTS" id="PR00722">
    <property type="entry name" value="CHYMOTRYPSIN"/>
</dbReference>
<dbReference type="SMART" id="SM00020">
    <property type="entry name" value="Tryp_SPc"/>
    <property type="match status" value="1"/>
</dbReference>
<dbReference type="SUPFAM" id="SSF50494">
    <property type="entry name" value="Trypsin-like serine proteases"/>
    <property type="match status" value="1"/>
</dbReference>
<dbReference type="PROSITE" id="PS50240">
    <property type="entry name" value="TRYPSIN_DOM"/>
    <property type="match status" value="1"/>
</dbReference>
<dbReference type="PROSITE" id="PS00134">
    <property type="entry name" value="TRYPSIN_HIS"/>
    <property type="match status" value="1"/>
</dbReference>
<dbReference type="PROSITE" id="PS00135">
    <property type="entry name" value="TRYPSIN_SER"/>
    <property type="match status" value="1"/>
</dbReference>
<comment type="function">
    <text evidence="1">Snake venom serine protease that may act in the hemostasis system of the prey.</text>
</comment>
<comment type="subunit">
    <text evidence="1">Monomer.</text>
</comment>
<comment type="subcellular location">
    <subcellularLocation>
        <location evidence="1">Secreted</location>
    </subcellularLocation>
</comment>
<comment type="tissue specificity">
    <text>Expressed by the venom gland.</text>
</comment>
<comment type="similarity">
    <text evidence="3">Belongs to the peptidase S1 family. Snake venom subfamily.</text>
</comment>